<accession>Q4VA45</accession>
<feature type="chain" id="PRO_0000393910" description="Zinc finger translocation-associated protein">
    <location>
        <begin position="1"/>
        <end position="678"/>
    </location>
</feature>
<feature type="region of interest" description="Disordered" evidence="2">
    <location>
        <begin position="1"/>
        <end position="100"/>
    </location>
</feature>
<feature type="region of interest" description="Disordered" evidence="2">
    <location>
        <begin position="174"/>
        <end position="250"/>
    </location>
</feature>
<feature type="region of interest" description="Disordered" evidence="2">
    <location>
        <begin position="333"/>
        <end position="413"/>
    </location>
</feature>
<feature type="region of interest" description="Disordered" evidence="2">
    <location>
        <begin position="493"/>
        <end position="583"/>
    </location>
</feature>
<feature type="compositionally biased region" description="Low complexity" evidence="2">
    <location>
        <begin position="66"/>
        <end position="78"/>
    </location>
</feature>
<feature type="compositionally biased region" description="Basic and acidic residues" evidence="2">
    <location>
        <begin position="79"/>
        <end position="88"/>
    </location>
</feature>
<feature type="compositionally biased region" description="Acidic residues" evidence="2">
    <location>
        <begin position="187"/>
        <end position="200"/>
    </location>
</feature>
<feature type="compositionally biased region" description="Low complexity" evidence="2">
    <location>
        <begin position="205"/>
        <end position="214"/>
    </location>
</feature>
<feature type="compositionally biased region" description="Low complexity" evidence="2">
    <location>
        <begin position="493"/>
        <end position="509"/>
    </location>
</feature>
<feature type="compositionally biased region" description="Acidic residues" evidence="2">
    <location>
        <begin position="512"/>
        <end position="524"/>
    </location>
</feature>
<feature type="compositionally biased region" description="Acidic residues" evidence="2">
    <location>
        <begin position="539"/>
        <end position="549"/>
    </location>
</feature>
<feature type="compositionally biased region" description="Pro residues" evidence="2">
    <location>
        <begin position="557"/>
        <end position="572"/>
    </location>
</feature>
<feature type="compositionally biased region" description="Basic and acidic residues" evidence="2">
    <location>
        <begin position="573"/>
        <end position="583"/>
    </location>
</feature>
<feature type="cross-link" description="Glycyl lysine isopeptide (Lys-Gly) (interchain with G-Cter in SUMO2)" evidence="1">
    <location>
        <position position="375"/>
    </location>
</feature>
<name>ZFTA_MOUSE</name>
<keyword id="KW-1017">Isopeptide bond</keyword>
<keyword id="KW-1185">Reference proteome</keyword>
<keyword id="KW-0832">Ubl conjugation</keyword>
<protein>
    <recommendedName>
        <fullName evidence="3">Zinc finger translocation-associated protein</fullName>
        <shortName evidence="3">ZFTA</shortName>
    </recommendedName>
</protein>
<comment type="sequence caution" evidence="3">
    <conflict type="miscellaneous discrepancy">
        <sequence resource="EMBL-CDS" id="AAH96549"/>
    </conflict>
    <text>Aberrant splicing.</text>
</comment>
<reference key="1">
    <citation type="journal article" date="2009" name="PLoS Biol.">
        <title>Lineage-specific biology revealed by a finished genome assembly of the mouse.</title>
        <authorList>
            <person name="Church D.M."/>
            <person name="Goodstadt L."/>
            <person name="Hillier L.W."/>
            <person name="Zody M.C."/>
            <person name="Goldstein S."/>
            <person name="She X."/>
            <person name="Bult C.J."/>
            <person name="Agarwala R."/>
            <person name="Cherry J.L."/>
            <person name="DiCuccio M."/>
            <person name="Hlavina W."/>
            <person name="Kapustin Y."/>
            <person name="Meric P."/>
            <person name="Maglott D."/>
            <person name="Birtle Z."/>
            <person name="Marques A.C."/>
            <person name="Graves T."/>
            <person name="Zhou S."/>
            <person name="Teague B."/>
            <person name="Potamousis K."/>
            <person name="Churas C."/>
            <person name="Place M."/>
            <person name="Herschleb J."/>
            <person name="Runnheim R."/>
            <person name="Forrest D."/>
            <person name="Amos-Landgraf J."/>
            <person name="Schwartz D.C."/>
            <person name="Cheng Z."/>
            <person name="Lindblad-Toh K."/>
            <person name="Eichler E.E."/>
            <person name="Ponting C.P."/>
        </authorList>
    </citation>
    <scope>NUCLEOTIDE SEQUENCE [LARGE SCALE GENOMIC DNA]</scope>
    <source>
        <strain>C57BL/6J</strain>
    </source>
</reference>
<reference key="2">
    <citation type="journal article" date="2004" name="Genome Res.">
        <title>The status, quality, and expansion of the NIH full-length cDNA project: the Mammalian Gene Collection (MGC).</title>
        <authorList>
            <consortium name="The MGC Project Team"/>
        </authorList>
    </citation>
    <scope>NUCLEOTIDE SEQUENCE [LARGE SCALE MRNA] OF 203-678</scope>
    <source>
        <strain>C57BL/6J</strain>
        <tissue>Brain</tissue>
    </source>
</reference>
<evidence type="ECO:0000250" key="1">
    <source>
        <dbReference type="UniProtKB" id="C9JLR9"/>
    </source>
</evidence>
<evidence type="ECO:0000256" key="2">
    <source>
        <dbReference type="SAM" id="MobiDB-lite"/>
    </source>
</evidence>
<evidence type="ECO:0000305" key="3"/>
<evidence type="ECO:0000312" key="4">
    <source>
        <dbReference type="MGI" id="MGI:1919667"/>
    </source>
</evidence>
<dbReference type="EMBL" id="AC129188">
    <property type="status" value="NOT_ANNOTATED_CDS"/>
    <property type="molecule type" value="Genomic_DNA"/>
</dbReference>
<dbReference type="EMBL" id="BC096549">
    <property type="protein sequence ID" value="AAH96549.1"/>
    <property type="status" value="ALT_SEQ"/>
    <property type="molecule type" value="mRNA"/>
</dbReference>
<dbReference type="CCDS" id="CCDS29524.2"/>
<dbReference type="RefSeq" id="NP_780590.3">
    <property type="nucleotide sequence ID" value="NM_175381.6"/>
</dbReference>
<dbReference type="SMR" id="Q4VA45"/>
<dbReference type="FunCoup" id="Q4VA45">
    <property type="interactions" value="1477"/>
</dbReference>
<dbReference type="STRING" id="10090.ENSMUSP00000123773"/>
<dbReference type="iPTMnet" id="Q4VA45"/>
<dbReference type="PhosphoSitePlus" id="Q4VA45"/>
<dbReference type="PaxDb" id="10090-ENSMUSP00000123773"/>
<dbReference type="PeptideAtlas" id="Q4VA45"/>
<dbReference type="Antibodypedia" id="72993">
    <property type="antibodies" value="48 antibodies from 12 providers"/>
</dbReference>
<dbReference type="DNASU" id="108899"/>
<dbReference type="Ensembl" id="ENSMUST00000159348.3">
    <property type="protein sequence ID" value="ENSMUSP00000123773.2"/>
    <property type="gene ID" value="ENSMUSG00000053080.11"/>
</dbReference>
<dbReference type="GeneID" id="108899"/>
<dbReference type="KEGG" id="mmu:108899"/>
<dbReference type="UCSC" id="uc008gkz.2">
    <property type="organism name" value="mouse"/>
</dbReference>
<dbReference type="AGR" id="MGI:1919667"/>
<dbReference type="CTD" id="65998"/>
<dbReference type="MGI" id="MGI:1919667">
    <property type="gene designation" value="Zfta"/>
</dbReference>
<dbReference type="VEuPathDB" id="HostDB:ENSMUSG00000053080"/>
<dbReference type="eggNOG" id="ENOG502QTI3">
    <property type="taxonomic scope" value="Eukaryota"/>
</dbReference>
<dbReference type="GeneTree" id="ENSGT00600000084617"/>
<dbReference type="HOGENOM" id="CLU_035783_0_0_1"/>
<dbReference type="InParanoid" id="Q4VA45"/>
<dbReference type="OMA" id="RWRMDYL"/>
<dbReference type="OrthoDB" id="9945249at2759"/>
<dbReference type="PhylomeDB" id="Q4VA45"/>
<dbReference type="TreeFam" id="TF337165"/>
<dbReference type="BioGRID-ORCS" id="108899">
    <property type="hits" value="3 hits in 75 CRISPR screens"/>
</dbReference>
<dbReference type="PRO" id="PR:Q4VA45"/>
<dbReference type="Proteomes" id="UP000000589">
    <property type="component" value="Chromosome 19"/>
</dbReference>
<dbReference type="RNAct" id="Q4VA45">
    <property type="molecule type" value="protein"/>
</dbReference>
<dbReference type="Bgee" id="ENSMUSG00000053080">
    <property type="expression patterns" value="Expressed in humerus cartilage element and 218 other cell types or tissues"/>
</dbReference>
<dbReference type="ExpressionAtlas" id="Q4VA45">
    <property type="expression patterns" value="baseline and differential"/>
</dbReference>
<dbReference type="GO" id="GO:0005634">
    <property type="term" value="C:nucleus"/>
    <property type="evidence" value="ECO:0000314"/>
    <property type="project" value="MGI"/>
</dbReference>
<dbReference type="InterPro" id="IPR040647">
    <property type="entry name" value="SPIN-DOC_Znf-C2H2"/>
</dbReference>
<dbReference type="InterPro" id="IPR013087">
    <property type="entry name" value="Znf_C2H2_type"/>
</dbReference>
<dbReference type="InterPro" id="IPR052675">
    <property type="entry name" value="ZnF_transloc-Spindlin_int"/>
</dbReference>
<dbReference type="PANTHER" id="PTHR34589">
    <property type="entry name" value="SIMILAR TO RIKEN CDNA 2700081O15"/>
    <property type="match status" value="1"/>
</dbReference>
<dbReference type="PANTHER" id="PTHR34589:SF2">
    <property type="entry name" value="ZINC FINGER TRANSLOCATION-ASSOCIATED PROTEIN"/>
    <property type="match status" value="1"/>
</dbReference>
<dbReference type="Pfam" id="PF18658">
    <property type="entry name" value="zf-C2H2_12"/>
    <property type="match status" value="4"/>
</dbReference>
<dbReference type="SMART" id="SM00355">
    <property type="entry name" value="ZnF_C2H2"/>
    <property type="match status" value="4"/>
</dbReference>
<proteinExistence type="evidence at transcript level"/>
<gene>
    <name evidence="4" type="primary">Zfta</name>
</gene>
<organism>
    <name type="scientific">Mus musculus</name>
    <name type="common">Mouse</name>
    <dbReference type="NCBI Taxonomy" id="10090"/>
    <lineage>
        <taxon>Eukaryota</taxon>
        <taxon>Metazoa</taxon>
        <taxon>Chordata</taxon>
        <taxon>Craniata</taxon>
        <taxon>Vertebrata</taxon>
        <taxon>Euteleostomi</taxon>
        <taxon>Mammalia</taxon>
        <taxon>Eutheria</taxon>
        <taxon>Euarchontoglires</taxon>
        <taxon>Glires</taxon>
        <taxon>Rodentia</taxon>
        <taxon>Myomorpha</taxon>
        <taxon>Muroidea</taxon>
        <taxon>Muridae</taxon>
        <taxon>Murinae</taxon>
        <taxon>Mus</taxon>
        <taxon>Mus</taxon>
    </lineage>
</organism>
<sequence>MEPGGDHRSRSGGGRGGPGPAVTSARGRRLPPTAASGGTEPEEDDGGQALQLEGGALGSWGSTPLPSSRARGPASSGRKYSDHCEARASRPGKSRIPGRDHRRYYHDHWRLEYLMDFIPSRHGMVCMVCGSSLATLKLSTIKRHIRQKHPYSLHWSPREKEVISNSWDAHLGLGAGGEAESLGAQGAEEEEEEDEEEEEGANLQACPPKGSGKAPAGGGCRRQRRGVRGGSVAPRRRRLAASRRAGGSRGLGARRLERRLKESLQNWFRAECLMDYDPRGNRLVCMACGRALPSLHLDDIRAHVLEVHPSSLGLSGPQRSALLQAWGDQPEALSELTQPSPDDDLVPQDLTRKSRDSAPAAGAPSSQDLSPPDVKEEAGWVPERPGPAEEEEGEGEGEREGIPNRPRRGRDHRRHYQERWRLEYLMELDGCRRGLVCMVCGGALASLKMSTIKRHIRQRHPGSNSLSGPVKALIAQEWSEKAAHLLALGLPRPESPSVPVAPSTASASEEGGGAEEAEPEEEWWGDAPLSPGAPSERPAEEEDDEDDSQEPGGLAFPPLPLPPPPPPPPPPPRSREQRRNYQPRWRGEYLMDYDGSRRGLVCMVCGGALATLKVSTIKRHILQVHPFSMDFTPEERQTILEAYEEAALRCYGHEGFGPPAPAPRDSGADLKPGAVCRA</sequence>